<gene>
    <name type="primary">OPG099</name>
    <name type="ORF">L1R</name>
</gene>
<comment type="function">
    <text evidence="1">Component of the entry fusion complex (EFC), which consists of 11 proteins. During cell infection, this complex mediates entry of the virion core into the host cytoplasm by a two-step mechanism consisting of lipid mixing of the viral and cellular membranes and subsequent pore formation.</text>
</comment>
<comment type="subunit">
    <text evidence="1">Component of the entry fusion complex (EFC) composed of OPG053, OPG076, OPG086, OPG094, OPG095, OPG099, OPG107, OPG143, OPG104, OPG147 and OPG155. Except for OPG095 and OPG053, each of the EFC proteins is required for assembly or stability of the complex.</text>
</comment>
<comment type="subcellular location">
    <subcellularLocation>
        <location evidence="1">Virion membrane</location>
        <topology evidence="1">Single-pass membrane protein</topology>
    </subcellularLocation>
    <text evidence="1">Localizes to the membrane surrounding the core of mature virus particles (MV).</text>
</comment>
<comment type="induction">
    <text evidence="1">Expressed in the late phase of the viral replicative cycle.</text>
</comment>
<comment type="PTM">
    <text evidence="1">Myristoylated.</text>
</comment>
<comment type="PTM">
    <text evidence="1">Disulfid bonds are oxidized in the cytoplasm by OPG088 protein.</text>
</comment>
<comment type="PTM">
    <text evidence="1">Unglycosylated because produced in viral factories instead of the classic ER -Golgi route.</text>
</comment>
<comment type="similarity">
    <text evidence="3">Belongs to the orthopoxvirus OPG095 family.</text>
</comment>
<evidence type="ECO:0000250" key="1">
    <source>
        <dbReference type="UniProtKB" id="P07612"/>
    </source>
</evidence>
<evidence type="ECO:0000255" key="2"/>
<evidence type="ECO:0000305" key="3"/>
<name>PG095_VAR67</name>
<organism>
    <name type="scientific">Variola virus (isolate Human/India/Ind3/1967)</name>
    <name type="common">VARV</name>
    <name type="synonym">Smallpox virus</name>
    <dbReference type="NCBI Taxonomy" id="587200"/>
    <lineage>
        <taxon>Viruses</taxon>
        <taxon>Varidnaviria</taxon>
        <taxon>Bamfordvirae</taxon>
        <taxon>Nucleocytoviricota</taxon>
        <taxon>Pokkesviricetes</taxon>
        <taxon>Chitovirales</taxon>
        <taxon>Poxviridae</taxon>
        <taxon>Chordopoxvirinae</taxon>
        <taxon>Orthopoxvirus</taxon>
        <taxon>Variola virus</taxon>
    </lineage>
</organism>
<protein>
    <recommendedName>
        <fullName>Entry-fusion complex associated protein OPG095</fullName>
    </recommendedName>
    <alternativeName>
        <fullName>EFC-associated protein OPG095</fullName>
    </alternativeName>
    <alternativeName>
        <fullName>Protein L1</fullName>
    </alternativeName>
    <alternativeName>
        <fullName>Virion membrane protein M25</fullName>
    </alternativeName>
</protein>
<organismHost>
    <name type="scientific">Homo sapiens</name>
    <name type="common">Human</name>
    <dbReference type="NCBI Taxonomy" id="9606"/>
</organismHost>
<feature type="initiator methionine" description="Removed; by host" evidence="1">
    <location>
        <position position="1"/>
    </location>
</feature>
<feature type="chain" id="PRO_0000099614" description="Entry-fusion complex associated protein OPG095">
    <location>
        <begin position="2"/>
        <end position="250"/>
    </location>
</feature>
<feature type="topological domain" description="Virion surface" evidence="2">
    <location>
        <begin position="2"/>
        <end position="183"/>
    </location>
</feature>
<feature type="transmembrane region" description="Helical" evidence="2">
    <location>
        <begin position="184"/>
        <end position="204"/>
    </location>
</feature>
<feature type="topological domain" description="Intravirion" evidence="2">
    <location>
        <begin position="205"/>
        <end position="250"/>
    </location>
</feature>
<feature type="region of interest" description="Targeting to MV membrane" evidence="1">
    <location>
        <begin position="2"/>
        <end position="12"/>
    </location>
</feature>
<feature type="lipid moiety-binding region" description="N-myristoyl glycine; by host" evidence="1">
    <location>
        <position position="2"/>
    </location>
</feature>
<feature type="disulfide bond" description="by OPG088" evidence="1">
    <location>
        <begin position="34"/>
        <end position="57"/>
    </location>
</feature>
<feature type="disulfide bond" description="by OPG088" evidence="1">
    <location>
        <begin position="49"/>
        <end position="136"/>
    </location>
</feature>
<feature type="disulfide bond" description="by OPG088" evidence="1">
    <location>
        <begin position="116"/>
        <end position="158"/>
    </location>
</feature>
<keyword id="KW-1015">Disulfide bond</keyword>
<keyword id="KW-0945">Host-virus interaction</keyword>
<keyword id="KW-0426">Late protein</keyword>
<keyword id="KW-0449">Lipoprotein</keyword>
<keyword id="KW-0472">Membrane</keyword>
<keyword id="KW-0519">Myristate</keyword>
<keyword id="KW-1185">Reference proteome</keyword>
<keyword id="KW-0812">Transmembrane</keyword>
<keyword id="KW-1133">Transmembrane helix</keyword>
<keyword id="KW-1161">Viral attachment to host cell</keyword>
<keyword id="KW-0261">Viral envelope protein</keyword>
<keyword id="KW-1162">Viral penetration into host cytoplasm</keyword>
<keyword id="KW-0946">Virion</keyword>
<keyword id="KW-1160">Virus entry into host cell</keyword>
<dbReference type="EMBL" id="X67119">
    <property type="protein sequence ID" value="CAA47572.1"/>
    <property type="molecule type" value="Genomic_DNA"/>
</dbReference>
<dbReference type="EMBL" id="S55844">
    <property type="protein sequence ID" value="AAB24669.1"/>
    <property type="molecule type" value="Genomic_DNA"/>
</dbReference>
<dbReference type="EMBL" id="X69198">
    <property type="protein sequence ID" value="CAA49014.1"/>
    <property type="molecule type" value="Genomic_DNA"/>
</dbReference>
<dbReference type="PIR" id="S33087">
    <property type="entry name" value="S33087"/>
</dbReference>
<dbReference type="SMR" id="P0DOT7"/>
<dbReference type="KEGG" id="vg:1486470"/>
<dbReference type="Proteomes" id="UP000002060">
    <property type="component" value="Segment"/>
</dbReference>
<dbReference type="GO" id="GO:0016020">
    <property type="term" value="C:membrane"/>
    <property type="evidence" value="ECO:0007669"/>
    <property type="project" value="UniProtKB-KW"/>
</dbReference>
<dbReference type="GO" id="GO:0019031">
    <property type="term" value="C:viral envelope"/>
    <property type="evidence" value="ECO:0007669"/>
    <property type="project" value="UniProtKB-KW"/>
</dbReference>
<dbReference type="GO" id="GO:0055036">
    <property type="term" value="C:virion membrane"/>
    <property type="evidence" value="ECO:0007669"/>
    <property type="project" value="UniProtKB-SubCell"/>
</dbReference>
<dbReference type="GO" id="GO:0046718">
    <property type="term" value="P:symbiont entry into host cell"/>
    <property type="evidence" value="ECO:0007669"/>
    <property type="project" value="UniProtKB-KW"/>
</dbReference>
<dbReference type="GO" id="GO:0019062">
    <property type="term" value="P:virion attachment to host cell"/>
    <property type="evidence" value="ECO:0007669"/>
    <property type="project" value="UniProtKB-KW"/>
</dbReference>
<dbReference type="InterPro" id="IPR003472">
    <property type="entry name" value="Virion_mem_poxvirus_L1"/>
</dbReference>
<dbReference type="Pfam" id="PF02442">
    <property type="entry name" value="L1R_F9L"/>
    <property type="match status" value="1"/>
</dbReference>
<proteinExistence type="inferred from homology"/>
<sequence>MGAAASIQTTVNTLSERISSKLEQEANASAQTKCDIEIGNFYIRQNHGCNLTVKNMCSADADAQLDAVLSAATETYSGLTPEQKAYVPAMFTAALNIQTSVNTVVRDFENYVKQTCNSSAVVDNKLKIQNVIIDECYGAPGSPTNLEFINTGSSKGNCAIKALMQLTTKATTQIAPRQVAGTGVQFYMIVIGVIILAALFMYYAKRMLFTSTNDKIKLILANKENVHWTTYMDTFFRTSPMVIATTDIQN</sequence>
<accession>P0DOT7</accession>
<accession>P33040</accession>
<reference key="1">
    <citation type="journal article" date="1993" name="Virus Res.">
        <title>Nucleotide sequence analysis of variola virus HindIII M, L, I genome fragments.</title>
        <authorList>
            <person name="Shchelkunov S.N."/>
            <person name="Blinov V.M."/>
            <person name="Totmenin A.V."/>
            <person name="Marennikova S.S."/>
            <person name="Kolykhalov A.A."/>
            <person name="Frolov I.V."/>
            <person name="Chizhikov V.E."/>
            <person name="Gytorov V.V."/>
            <person name="Gashikov P.V."/>
            <person name="Belanov E.F."/>
            <person name="Belavin P.A."/>
            <person name="Resenchuk S.M."/>
            <person name="Andzhaparidze O.G."/>
            <person name="Sandakhchiev L.S."/>
        </authorList>
    </citation>
    <scope>NUCLEOTIDE SEQUENCE [GENOMIC DNA]</scope>
</reference>
<reference key="2">
    <citation type="journal article" date="1993" name="FEBS Lett.">
        <title>Genes of variola and vaccinia viruses necessary to overcome the host protective mechanisms.</title>
        <authorList>
            <person name="Shchelkunov S.N."/>
            <person name="Blinov V.M."/>
            <person name="Sandakhchiev L.S."/>
        </authorList>
    </citation>
    <scope>NUCLEOTIDE SEQUENCE [LARGE SCALE GENOMIC DNA]</scope>
</reference>